<reference key="1">
    <citation type="journal article" date="2003" name="Nature">
        <title>The genome of a motile marine Synechococcus.</title>
        <authorList>
            <person name="Palenik B."/>
            <person name="Brahamsha B."/>
            <person name="Larimer F.W."/>
            <person name="Land M.L."/>
            <person name="Hauser L."/>
            <person name="Chain P."/>
            <person name="Lamerdin J.E."/>
            <person name="Regala W."/>
            <person name="Allen E.E."/>
            <person name="McCarren J."/>
            <person name="Paulsen I.T."/>
            <person name="Dufresne A."/>
            <person name="Partensky F."/>
            <person name="Webb E.A."/>
            <person name="Waterbury J."/>
        </authorList>
    </citation>
    <scope>NUCLEOTIDE SEQUENCE [LARGE SCALE GENOMIC DNA]</scope>
    <source>
        <strain>WH8102</strain>
    </source>
</reference>
<accession>Q7TTX2</accession>
<protein>
    <recommendedName>
        <fullName evidence="1">Co-chaperonin GroES</fullName>
    </recommendedName>
    <alternativeName>
        <fullName evidence="1">10 kDa chaperonin</fullName>
    </alternativeName>
    <alternativeName>
        <fullName evidence="1">Chaperonin-10</fullName>
        <shortName evidence="1">Cpn10</shortName>
    </alternativeName>
</protein>
<proteinExistence type="inferred from homology"/>
<keyword id="KW-0143">Chaperone</keyword>
<keyword id="KW-0963">Cytoplasm</keyword>
<evidence type="ECO:0000255" key="1">
    <source>
        <dbReference type="HAMAP-Rule" id="MF_00580"/>
    </source>
</evidence>
<feature type="chain" id="PRO_1000025387" description="Co-chaperonin GroES">
    <location>
        <begin position="1"/>
        <end position="103"/>
    </location>
</feature>
<gene>
    <name evidence="1" type="primary">groES</name>
    <name evidence="1" type="synonym">groS</name>
    <name type="ordered locus">SYNW0513</name>
</gene>
<name>CH10_PARMW</name>
<sequence>MAAVSLSVSTVKPLGDRVFIKVSESEEKTAGGILLPDTAKEKPQVGEVVQVGPGKRNDDGSRQAPEVGVGDKVLYSKYAGTDIKLGGDEFVLLTEKDILAIVN</sequence>
<dbReference type="EMBL" id="BX569690">
    <property type="protein sequence ID" value="CAE07028.1"/>
    <property type="molecule type" value="Genomic_DNA"/>
</dbReference>
<dbReference type="RefSeq" id="WP_011127384.1">
    <property type="nucleotide sequence ID" value="NC_005070.1"/>
</dbReference>
<dbReference type="SMR" id="Q7TTX2"/>
<dbReference type="STRING" id="84588.SYNW0513"/>
<dbReference type="KEGG" id="syw:SYNW0513"/>
<dbReference type="eggNOG" id="COG0234">
    <property type="taxonomic scope" value="Bacteria"/>
</dbReference>
<dbReference type="HOGENOM" id="CLU_132825_2_1_3"/>
<dbReference type="Proteomes" id="UP000001422">
    <property type="component" value="Chromosome"/>
</dbReference>
<dbReference type="GO" id="GO:0005737">
    <property type="term" value="C:cytoplasm"/>
    <property type="evidence" value="ECO:0007669"/>
    <property type="project" value="UniProtKB-SubCell"/>
</dbReference>
<dbReference type="GO" id="GO:0005524">
    <property type="term" value="F:ATP binding"/>
    <property type="evidence" value="ECO:0007669"/>
    <property type="project" value="InterPro"/>
</dbReference>
<dbReference type="GO" id="GO:0046872">
    <property type="term" value="F:metal ion binding"/>
    <property type="evidence" value="ECO:0007669"/>
    <property type="project" value="TreeGrafter"/>
</dbReference>
<dbReference type="GO" id="GO:0044183">
    <property type="term" value="F:protein folding chaperone"/>
    <property type="evidence" value="ECO:0007669"/>
    <property type="project" value="InterPro"/>
</dbReference>
<dbReference type="GO" id="GO:0051087">
    <property type="term" value="F:protein-folding chaperone binding"/>
    <property type="evidence" value="ECO:0007669"/>
    <property type="project" value="TreeGrafter"/>
</dbReference>
<dbReference type="GO" id="GO:0051082">
    <property type="term" value="F:unfolded protein binding"/>
    <property type="evidence" value="ECO:0007669"/>
    <property type="project" value="TreeGrafter"/>
</dbReference>
<dbReference type="GO" id="GO:0051085">
    <property type="term" value="P:chaperone cofactor-dependent protein refolding"/>
    <property type="evidence" value="ECO:0007669"/>
    <property type="project" value="TreeGrafter"/>
</dbReference>
<dbReference type="CDD" id="cd00320">
    <property type="entry name" value="cpn10"/>
    <property type="match status" value="1"/>
</dbReference>
<dbReference type="FunFam" id="2.30.33.40:FF:000001">
    <property type="entry name" value="10 kDa chaperonin"/>
    <property type="match status" value="1"/>
</dbReference>
<dbReference type="Gene3D" id="2.30.33.40">
    <property type="entry name" value="GroES chaperonin"/>
    <property type="match status" value="1"/>
</dbReference>
<dbReference type="HAMAP" id="MF_00580">
    <property type="entry name" value="CH10"/>
    <property type="match status" value="1"/>
</dbReference>
<dbReference type="InterPro" id="IPR020818">
    <property type="entry name" value="Chaperonin_GroES"/>
</dbReference>
<dbReference type="InterPro" id="IPR037124">
    <property type="entry name" value="Chaperonin_GroES_sf"/>
</dbReference>
<dbReference type="InterPro" id="IPR018369">
    <property type="entry name" value="Chaprnonin_Cpn10_CS"/>
</dbReference>
<dbReference type="InterPro" id="IPR011032">
    <property type="entry name" value="GroES-like_sf"/>
</dbReference>
<dbReference type="NCBIfam" id="NF001530">
    <property type="entry name" value="PRK00364.1-6"/>
    <property type="match status" value="1"/>
</dbReference>
<dbReference type="NCBIfam" id="NF001531">
    <property type="entry name" value="PRK00364.2-2"/>
    <property type="match status" value="1"/>
</dbReference>
<dbReference type="NCBIfam" id="NF001533">
    <property type="entry name" value="PRK00364.2-4"/>
    <property type="match status" value="1"/>
</dbReference>
<dbReference type="NCBIfam" id="NF001534">
    <property type="entry name" value="PRK00364.2-5"/>
    <property type="match status" value="1"/>
</dbReference>
<dbReference type="PANTHER" id="PTHR10772">
    <property type="entry name" value="10 KDA HEAT SHOCK PROTEIN"/>
    <property type="match status" value="1"/>
</dbReference>
<dbReference type="PANTHER" id="PTHR10772:SF58">
    <property type="entry name" value="CO-CHAPERONIN GROES"/>
    <property type="match status" value="1"/>
</dbReference>
<dbReference type="Pfam" id="PF00166">
    <property type="entry name" value="Cpn10"/>
    <property type="match status" value="1"/>
</dbReference>
<dbReference type="PRINTS" id="PR00297">
    <property type="entry name" value="CHAPERONIN10"/>
</dbReference>
<dbReference type="SMART" id="SM00883">
    <property type="entry name" value="Cpn10"/>
    <property type="match status" value="1"/>
</dbReference>
<dbReference type="SUPFAM" id="SSF50129">
    <property type="entry name" value="GroES-like"/>
    <property type="match status" value="1"/>
</dbReference>
<dbReference type="PROSITE" id="PS00681">
    <property type="entry name" value="CHAPERONINS_CPN10"/>
    <property type="match status" value="1"/>
</dbReference>
<comment type="function">
    <text evidence="1">Together with the chaperonin GroEL, plays an essential role in assisting protein folding. The GroEL-GroES system forms a nano-cage that allows encapsulation of the non-native substrate proteins and provides a physical environment optimized to promote and accelerate protein folding. GroES binds to the apical surface of the GroEL ring, thereby capping the opening of the GroEL channel.</text>
</comment>
<comment type="subunit">
    <text evidence="1">Heptamer of 7 subunits arranged in a ring. Interacts with the chaperonin GroEL.</text>
</comment>
<comment type="subcellular location">
    <subcellularLocation>
        <location evidence="1">Cytoplasm</location>
    </subcellularLocation>
</comment>
<comment type="similarity">
    <text evidence="1">Belongs to the GroES chaperonin family.</text>
</comment>
<organism>
    <name type="scientific">Parasynechococcus marenigrum (strain WH8102)</name>
    <dbReference type="NCBI Taxonomy" id="84588"/>
    <lineage>
        <taxon>Bacteria</taxon>
        <taxon>Bacillati</taxon>
        <taxon>Cyanobacteriota</taxon>
        <taxon>Cyanophyceae</taxon>
        <taxon>Synechococcales</taxon>
        <taxon>Prochlorococcaceae</taxon>
        <taxon>Parasynechococcus</taxon>
        <taxon>Parasynechococcus marenigrum</taxon>
    </lineage>
</organism>